<keyword id="KW-0249">Electron transport</keyword>
<keyword id="KW-0349">Heme</keyword>
<keyword id="KW-0408">Iron</keyword>
<keyword id="KW-0472">Membrane</keyword>
<keyword id="KW-0479">Metal-binding</keyword>
<keyword id="KW-0602">Photosynthesis</keyword>
<keyword id="KW-0674">Reaction center</keyword>
<keyword id="KW-1185">Reference proteome</keyword>
<keyword id="KW-0677">Repeat</keyword>
<keyword id="KW-0813">Transport</keyword>
<gene>
    <name type="primary">pufC</name>
    <name type="synonym">cytC</name>
    <name type="ordered locus">RD1_0102</name>
</gene>
<organism>
    <name type="scientific">Roseobacter denitrificans (strain ATCC 33942 / OCh 114)</name>
    <name type="common">Erythrobacter sp. (strain OCh 114)</name>
    <name type="synonym">Roseobacter denitrificans</name>
    <dbReference type="NCBI Taxonomy" id="375451"/>
    <lineage>
        <taxon>Bacteria</taxon>
        <taxon>Pseudomonadati</taxon>
        <taxon>Pseudomonadota</taxon>
        <taxon>Alphaproteobacteria</taxon>
        <taxon>Rhodobacterales</taxon>
        <taxon>Roseobacteraceae</taxon>
        <taxon>Roseobacter</taxon>
    </lineage>
</organism>
<reference key="1">
    <citation type="journal article" date="1997" name="J. Bacteriol.">
        <title>Structure of the puf operon of the obligately aerobic, bacteriochlorophyll alpha-containing bacterium Roseobacter denitrificans OCh114 and its expression in a Rhodobacter capsulatus puf puc deletion mutant.</title>
        <authorList>
            <person name="Kortluke C."/>
            <person name="Breese K."/>
            <person name="Gad'on N."/>
            <person name="Labahn A."/>
            <person name="Drews G."/>
        </authorList>
    </citation>
    <scope>NUCLEOTIDE SEQUENCE [GENOMIC DNA]</scope>
</reference>
<reference key="2">
    <citation type="journal article" date="2007" name="J. Bacteriol.">
        <title>The complete genome sequence of Roseobacter denitrificans reveals a mixotrophic rather than photosynthetic metabolism.</title>
        <authorList>
            <person name="Swingley W.D."/>
            <person name="Sadekar S."/>
            <person name="Mastrian S.D."/>
            <person name="Matthies H.J."/>
            <person name="Hao J."/>
            <person name="Ramos H."/>
            <person name="Acharya C.R."/>
            <person name="Conrad A.L."/>
            <person name="Taylor H.L."/>
            <person name="Dejesa L.C."/>
            <person name="Shah M.K."/>
            <person name="O'Huallachain M.E."/>
            <person name="Lince M.T."/>
            <person name="Blankenship R.E."/>
            <person name="Beatty J.T."/>
            <person name="Touchman J.W."/>
        </authorList>
    </citation>
    <scope>NUCLEOTIDE SEQUENCE [LARGE SCALE GENOMIC DNA]</scope>
    <source>
        <strain>ATCC 33942 / OCh 114</strain>
    </source>
</reference>
<reference key="3">
    <citation type="journal article" date="1991" name="Mol. Microbiol.">
        <title>Organization of the genes coding for the reaction-centre L and M subunits and B870 antenna polypeptides alpha and beta from the aerobic photosynthetic bacterium Erythrobacter species OCH114.</title>
        <authorList>
            <person name="Liebetanz R."/>
            <person name="Hornberger U."/>
            <person name="Drews G."/>
        </authorList>
    </citation>
    <scope>NUCLEOTIDE SEQUENCE [GENOMIC DNA] OF 1-187</scope>
</reference>
<accession>P26278</accession>
<accession>Q16DV6</accession>
<accession>Q52727</accession>
<feature type="chain" id="PRO_0000108413" description="Photosynthetic reaction center cytochrome c subunit">
    <location>
        <begin position="1"/>
        <end position="371"/>
    </location>
</feature>
<feature type="binding site" description="axial binding residue" evidence="2">
    <location>
        <position position="114"/>
    </location>
    <ligand>
        <name>heme</name>
        <dbReference type="ChEBI" id="CHEBI:30413"/>
        <label>1</label>
    </ligand>
    <ligandPart>
        <name>Fe</name>
        <dbReference type="ChEBI" id="CHEBI:18248"/>
    </ligandPart>
</feature>
<feature type="binding site" description="covalent" evidence="2">
    <location>
        <position position="127"/>
    </location>
    <ligand>
        <name>heme</name>
        <dbReference type="ChEBI" id="CHEBI:30413"/>
        <label>1</label>
    </ligand>
</feature>
<feature type="binding site" description="covalent" evidence="2">
    <location>
        <position position="130"/>
    </location>
    <ligand>
        <name>heme</name>
        <dbReference type="ChEBI" id="CHEBI:30413"/>
        <label>1</label>
    </ligand>
</feature>
<feature type="binding site" description="axial binding residue" evidence="2">
    <location>
        <position position="131"/>
    </location>
    <ligand>
        <name>heme</name>
        <dbReference type="ChEBI" id="CHEBI:30413"/>
        <label>1</label>
    </ligand>
    <ligandPart>
        <name>Fe</name>
        <dbReference type="ChEBI" id="CHEBI:18248"/>
    </ligandPart>
</feature>
<feature type="binding site" description="axial binding residue" evidence="2">
    <location>
        <position position="153"/>
    </location>
    <ligand>
        <name>heme</name>
        <dbReference type="ChEBI" id="CHEBI:30413"/>
        <label>2</label>
    </ligand>
    <ligandPart>
        <name>Fe</name>
        <dbReference type="ChEBI" id="CHEBI:18248"/>
    </ligandPart>
</feature>
<feature type="binding site" description="axial binding residue" evidence="2">
    <location>
        <position position="167"/>
    </location>
    <ligand>
        <name>heme</name>
        <dbReference type="ChEBI" id="CHEBI:30413"/>
        <label>4</label>
    </ligand>
    <ligandPart>
        <name>Fe</name>
        <dbReference type="ChEBI" id="CHEBI:18248"/>
    </ligandPart>
</feature>
<feature type="binding site" description="covalent" evidence="2">
    <location>
        <position position="178"/>
    </location>
    <ligand>
        <name>heme</name>
        <dbReference type="ChEBI" id="CHEBI:30413"/>
        <label>2</label>
    </ligand>
</feature>
<feature type="binding site" description="covalent" evidence="2">
    <location>
        <position position="181"/>
    </location>
    <ligand>
        <name>heme</name>
        <dbReference type="ChEBI" id="CHEBI:30413"/>
        <label>2</label>
    </ligand>
</feature>
<feature type="binding site" description="axial binding residue" evidence="2">
    <location>
        <position position="182"/>
    </location>
    <ligand>
        <name>heme</name>
        <dbReference type="ChEBI" id="CHEBI:30413"/>
        <label>2</label>
    </ligand>
    <ligandPart>
        <name>Fe</name>
        <dbReference type="ChEBI" id="CHEBI:18248"/>
    </ligandPart>
</feature>
<feature type="binding site" description="axial binding residue" evidence="2">
    <location>
        <position position="267"/>
    </location>
    <ligand>
        <name>heme</name>
        <dbReference type="ChEBI" id="CHEBI:30413"/>
        <label>3</label>
    </ligand>
    <ligandPart>
        <name>Fe</name>
        <dbReference type="ChEBI" id="CHEBI:18248"/>
    </ligandPart>
</feature>
<feature type="binding site" description="covalent" evidence="2">
    <location>
        <position position="278"/>
    </location>
    <ligand>
        <name>heme</name>
        <dbReference type="ChEBI" id="CHEBI:30413"/>
        <label>3</label>
    </ligand>
</feature>
<feature type="binding site" description="covalent" evidence="2">
    <location>
        <position position="281"/>
    </location>
    <ligand>
        <name>heme</name>
        <dbReference type="ChEBI" id="CHEBI:30413"/>
        <label>3</label>
    </ligand>
</feature>
<feature type="binding site" description="axial binding residue" evidence="2">
    <location>
        <position position="282"/>
    </location>
    <ligand>
        <name>heme</name>
        <dbReference type="ChEBI" id="CHEBI:30413"/>
        <label>3</label>
    </ligand>
    <ligandPart>
        <name>Fe</name>
        <dbReference type="ChEBI" id="CHEBI:18248"/>
    </ligandPart>
</feature>
<feature type="binding site" description="covalent" evidence="2">
    <location>
        <position position="339"/>
    </location>
    <ligand>
        <name>heme</name>
        <dbReference type="ChEBI" id="CHEBI:30413"/>
        <label>4</label>
    </ligand>
</feature>
<feature type="binding site" description="covalent" evidence="2">
    <location>
        <position position="342"/>
    </location>
    <ligand>
        <name>heme</name>
        <dbReference type="ChEBI" id="CHEBI:30413"/>
        <label>4</label>
    </ligand>
</feature>
<feature type="binding site" description="axial binding residue" evidence="2">
    <location>
        <position position="343"/>
    </location>
    <ligand>
        <name>heme</name>
        <dbReference type="ChEBI" id="CHEBI:30413"/>
        <label>4</label>
    </ligand>
    <ligandPart>
        <name>Fe</name>
        <dbReference type="ChEBI" id="CHEBI:18248"/>
    </ligandPart>
</feature>
<feature type="sequence conflict" description="In Ref. 1; CAA58310." evidence="3" ref="1">
    <original>V</original>
    <variation>G</variation>
    <location>
        <position position="236"/>
    </location>
</feature>
<feature type="sequence conflict" description="In Ref. 1; CAA58310." evidence="3" ref="1">
    <original>KPMQGLNVIADWPELATTEAPVYE</original>
    <variation>NRCKA</variation>
    <location>
        <begin position="348"/>
        <end position="371"/>
    </location>
</feature>
<name>CYCR_ROSDO</name>
<sequence length="371" mass="41168">MFPKWFDKWNADNPTNIFGPAILIGVLGVAVFGAAAIVSIGNPAQTASMQTGPRGTGMHVAEFNVTRFAPDPTIEEYYTEAPYIPEGGEELAKDIYENVQVLGDLTDDNFNRVMTAMTQWIAPEEGCVYCHGEGDLETYGEDNLYTKVVARRMIQMTQNINENWDGHVNANAEVGVNCYTCHRGEHVPSEIWFNITPVTEATAGWASVQNRATPLSQSTSLPSNALEIYLTEYEAVNVHDLESRVAGVPNDVEVASIQKTEMTFSLMNYFSNSLGVNCVFCHNSRAFYDPGQHTPQWATALLGRQMVIEMNQEYLIPLEDEYPEDRLGPVYADAPKAACKTCHKGYQKPMQGLNVIADWPELATTEAPVYE</sequence>
<protein>
    <recommendedName>
        <fullName>Photosynthetic reaction center cytochrome c subunit</fullName>
    </recommendedName>
</protein>
<dbReference type="EMBL" id="X83392">
    <property type="protein sequence ID" value="CAA58310.1"/>
    <property type="molecule type" value="Genomic_DNA"/>
</dbReference>
<dbReference type="EMBL" id="CP000362">
    <property type="protein sequence ID" value="ABG29837.1"/>
    <property type="molecule type" value="Genomic_DNA"/>
</dbReference>
<dbReference type="EMBL" id="X57597">
    <property type="protein sequence ID" value="CAA40820.1"/>
    <property type="molecule type" value="Genomic_DNA"/>
</dbReference>
<dbReference type="PIR" id="S16314">
    <property type="entry name" value="S16314"/>
</dbReference>
<dbReference type="RefSeq" id="WP_011566459.1">
    <property type="nucleotide sequence ID" value="NC_008209.1"/>
</dbReference>
<dbReference type="SMR" id="P26278"/>
<dbReference type="STRING" id="375451.RD1_0102"/>
<dbReference type="KEGG" id="rde:RD1_0102"/>
<dbReference type="eggNOG" id="ENOG502Z7SF">
    <property type="taxonomic scope" value="Bacteria"/>
</dbReference>
<dbReference type="HOGENOM" id="CLU_050380_0_0_5"/>
<dbReference type="OrthoDB" id="9813732at2"/>
<dbReference type="Proteomes" id="UP000007029">
    <property type="component" value="Chromosome"/>
</dbReference>
<dbReference type="GO" id="GO:0030077">
    <property type="term" value="C:plasma membrane light-harvesting complex"/>
    <property type="evidence" value="ECO:0007669"/>
    <property type="project" value="InterPro"/>
</dbReference>
<dbReference type="GO" id="GO:0042717">
    <property type="term" value="C:plasma membrane-derived chromatophore membrane"/>
    <property type="evidence" value="ECO:0007669"/>
    <property type="project" value="UniProtKB-SubCell"/>
</dbReference>
<dbReference type="GO" id="GO:0009055">
    <property type="term" value="F:electron transfer activity"/>
    <property type="evidence" value="ECO:0007669"/>
    <property type="project" value="InterPro"/>
</dbReference>
<dbReference type="GO" id="GO:0020037">
    <property type="term" value="F:heme binding"/>
    <property type="evidence" value="ECO:0007669"/>
    <property type="project" value="InterPro"/>
</dbReference>
<dbReference type="GO" id="GO:0005506">
    <property type="term" value="F:iron ion binding"/>
    <property type="evidence" value="ECO:0007669"/>
    <property type="project" value="InterPro"/>
</dbReference>
<dbReference type="GO" id="GO:0019684">
    <property type="term" value="P:photosynthesis, light reaction"/>
    <property type="evidence" value="ECO:0007669"/>
    <property type="project" value="InterPro"/>
</dbReference>
<dbReference type="CDD" id="cd09224">
    <property type="entry name" value="CytoC_RC"/>
    <property type="match status" value="1"/>
</dbReference>
<dbReference type="Gene3D" id="1.10.468.10">
    <property type="entry name" value="Photosynthetic Reaction Center, subunit C, domain 2"/>
    <property type="match status" value="2"/>
</dbReference>
<dbReference type="InterPro" id="IPR023119">
    <property type="entry name" value="Multihaem_cyt_PRC_cyt_su-like"/>
</dbReference>
<dbReference type="InterPro" id="IPR036280">
    <property type="entry name" value="Multihaem_cyt_sf"/>
</dbReference>
<dbReference type="InterPro" id="IPR003158">
    <property type="entry name" value="Photosyn_RC_cyt_c-su"/>
</dbReference>
<dbReference type="NCBIfam" id="NF040706">
    <property type="entry name" value="photo_cyt_PufC"/>
    <property type="match status" value="1"/>
</dbReference>
<dbReference type="Pfam" id="PF02276">
    <property type="entry name" value="CytoC_RC"/>
    <property type="match status" value="1"/>
</dbReference>
<dbReference type="PIRSF" id="PIRSF000017">
    <property type="entry name" value="RC_cytochrome"/>
    <property type="match status" value="1"/>
</dbReference>
<dbReference type="SUPFAM" id="SSF48695">
    <property type="entry name" value="Multiheme cytochromes"/>
    <property type="match status" value="1"/>
</dbReference>
<dbReference type="PROSITE" id="PS51008">
    <property type="entry name" value="MULTIHEME_CYTC"/>
    <property type="match status" value="1"/>
</dbReference>
<proteinExistence type="inferred from homology"/>
<comment type="function">
    <text evidence="2">The reaction center of purple bacteria contains a tightly bound cytochrome molecule which re-reduces the photo oxidized primary electron donor.</text>
</comment>
<comment type="subunit">
    <text evidence="1">Component of the photosynthetic reaction center composed of protein subunits L (PufL), M (PufM), H (PuhA) and cytochrome C (PufC). The reaction center interacts with light-harvesting antenna complex LH1.</text>
</comment>
<comment type="subcellular location">
    <subcellularLocation>
        <location evidence="2">Cellular chromatophore membrane</location>
    </subcellularLocation>
</comment>
<comment type="PTM">
    <text evidence="2">Binds 4 heme groups per subunit.</text>
</comment>
<evidence type="ECO:0000250" key="1">
    <source>
        <dbReference type="UniProtKB" id="D2Z0P5"/>
    </source>
</evidence>
<evidence type="ECO:0000250" key="2">
    <source>
        <dbReference type="UniProtKB" id="P07173"/>
    </source>
</evidence>
<evidence type="ECO:0000305" key="3"/>